<comment type="function">
    <text evidence="3">Palmitoyltransferase that targets several endosomal SNAREs. Palmitoylates the SNAREs SNC1, SNC2, SYN8 and TLG1, at cysteine residues close to the cytoplasmic end of their transmembrane domain. May have a role in the cellular quality control of transmembrane domain-containing proteins.</text>
</comment>
<comment type="catalytic activity">
    <reaction>
        <text>L-cysteinyl-[protein] + hexadecanoyl-CoA = S-hexadecanoyl-L-cysteinyl-[protein] + CoA</text>
        <dbReference type="Rhea" id="RHEA:36683"/>
        <dbReference type="Rhea" id="RHEA-COMP:10131"/>
        <dbReference type="Rhea" id="RHEA-COMP:11032"/>
        <dbReference type="ChEBI" id="CHEBI:29950"/>
        <dbReference type="ChEBI" id="CHEBI:57287"/>
        <dbReference type="ChEBI" id="CHEBI:57379"/>
        <dbReference type="ChEBI" id="CHEBI:74151"/>
        <dbReference type="EC" id="2.3.1.225"/>
    </reaction>
</comment>
<comment type="subcellular location">
    <subcellularLocation>
        <location evidence="3">Endoplasmic reticulum membrane</location>
        <topology evidence="3">Multi-pass membrane protein</topology>
    </subcellularLocation>
</comment>
<comment type="domain">
    <text>The DHHC domain is required for palmitoyltransferase activity.</text>
</comment>
<comment type="similarity">
    <text evidence="4">Belongs to the DHHC palmitoyltransferase family. SWF1 subfamily.</text>
</comment>
<gene>
    <name type="primary">SWF1</name>
    <name type="synonym">PSL10</name>
    <name type="ordered locus">YDR126W</name>
    <name type="ORF">YD9302.01</name>
    <name type="ORF">YD9727.21</name>
</gene>
<sequence>MSWNLLFVLLIGFVVLILLSPVFKSTWPFSTFYRNVFQPFLVDDQKYRWKLHLVPLFYTSIYLYLVYTYHMRVESTIKNELFLLERILIVPIIILPPVALGILAMVSRAEDSKDHKSGSTEEYPYDYLLYYPAIKCSTCRIVKPARSKHCSICNRCVLVADHHCIWINNCIGKGNYLQFYLFLISNIFSMCYAFLRLWYISLNSTSTLPRAVLTLTILCGCFTIICAIFTYLQLAIVKEGMTTNEQDKWYTIQEYMREGKLVRSLDDDCPSWFFKCTEQKDDAAEPLQDQHVTFYSTNAYDHKHYNLTHYITIKDASEIPNIYDKGTFLANLTDLI</sequence>
<keyword id="KW-0012">Acyltransferase</keyword>
<keyword id="KW-0256">Endoplasmic reticulum</keyword>
<keyword id="KW-0449">Lipoprotein</keyword>
<keyword id="KW-0472">Membrane</keyword>
<keyword id="KW-0564">Palmitate</keyword>
<keyword id="KW-1185">Reference proteome</keyword>
<keyword id="KW-0808">Transferase</keyword>
<keyword id="KW-0812">Transmembrane</keyword>
<keyword id="KW-1133">Transmembrane helix</keyword>
<evidence type="ECO:0000255" key="1"/>
<evidence type="ECO:0000255" key="2">
    <source>
        <dbReference type="PROSITE-ProRule" id="PRU00067"/>
    </source>
</evidence>
<evidence type="ECO:0000269" key="3">
    <source>
    </source>
</evidence>
<evidence type="ECO:0000305" key="4"/>
<dbReference type="EC" id="2.3.1.225"/>
<dbReference type="EMBL" id="Z48758">
    <property type="protein sequence ID" value="CAA88679.1"/>
    <property type="molecule type" value="Genomic_DNA"/>
</dbReference>
<dbReference type="EMBL" id="Z48179">
    <property type="protein sequence ID" value="CAA88207.1"/>
    <property type="molecule type" value="Genomic_DNA"/>
</dbReference>
<dbReference type="EMBL" id="AY557692">
    <property type="protein sequence ID" value="AAS56018.1"/>
    <property type="molecule type" value="Genomic_DNA"/>
</dbReference>
<dbReference type="EMBL" id="BK006938">
    <property type="protein sequence ID" value="DAA11972.1"/>
    <property type="molecule type" value="Genomic_DNA"/>
</dbReference>
<dbReference type="PIR" id="S52691">
    <property type="entry name" value="S52691"/>
</dbReference>
<dbReference type="RefSeq" id="NP_010411.1">
    <property type="nucleotide sequence ID" value="NM_001180434.1"/>
</dbReference>
<dbReference type="SMR" id="Q04629"/>
<dbReference type="BioGRID" id="32182">
    <property type="interactions" value="486"/>
</dbReference>
<dbReference type="DIP" id="DIP-8105N"/>
<dbReference type="FunCoup" id="Q04629">
    <property type="interactions" value="51"/>
</dbReference>
<dbReference type="IntAct" id="Q04629">
    <property type="interactions" value="2"/>
</dbReference>
<dbReference type="MINT" id="Q04629"/>
<dbReference type="STRING" id="4932.YDR126W"/>
<dbReference type="PaxDb" id="4932-YDR126W"/>
<dbReference type="PeptideAtlas" id="Q04629"/>
<dbReference type="EnsemblFungi" id="YDR126W_mRNA">
    <property type="protein sequence ID" value="YDR126W"/>
    <property type="gene ID" value="YDR126W"/>
</dbReference>
<dbReference type="GeneID" id="851704"/>
<dbReference type="KEGG" id="sce:YDR126W"/>
<dbReference type="AGR" id="SGD:S000002533"/>
<dbReference type="SGD" id="S000002533">
    <property type="gene designation" value="SWF1"/>
</dbReference>
<dbReference type="VEuPathDB" id="FungiDB:YDR126W"/>
<dbReference type="eggNOG" id="KOG1312">
    <property type="taxonomic scope" value="Eukaryota"/>
</dbReference>
<dbReference type="GeneTree" id="ENSGT00940000164006"/>
<dbReference type="HOGENOM" id="CLU_042181_2_0_1"/>
<dbReference type="InParanoid" id="Q04629"/>
<dbReference type="OMA" id="STNAYDH"/>
<dbReference type="OrthoDB" id="9909019at2759"/>
<dbReference type="BioCyc" id="YEAST:G3O-29726-MONOMER"/>
<dbReference type="BRENDA" id="2.3.1.225">
    <property type="organism ID" value="984"/>
</dbReference>
<dbReference type="BioGRID-ORCS" id="851704">
    <property type="hits" value="6 hits in 10 CRISPR screens"/>
</dbReference>
<dbReference type="PRO" id="PR:Q04629"/>
<dbReference type="Proteomes" id="UP000002311">
    <property type="component" value="Chromosome IV"/>
</dbReference>
<dbReference type="RNAct" id="Q04629">
    <property type="molecule type" value="protein"/>
</dbReference>
<dbReference type="GO" id="GO:0030479">
    <property type="term" value="C:actin cortical patch"/>
    <property type="evidence" value="ECO:0000314"/>
    <property type="project" value="SGD"/>
</dbReference>
<dbReference type="GO" id="GO:0032432">
    <property type="term" value="C:actin filament bundle"/>
    <property type="evidence" value="ECO:0000314"/>
    <property type="project" value="SGD"/>
</dbReference>
<dbReference type="GO" id="GO:0005783">
    <property type="term" value="C:endoplasmic reticulum"/>
    <property type="evidence" value="ECO:0007005"/>
    <property type="project" value="SGD"/>
</dbReference>
<dbReference type="GO" id="GO:0005789">
    <property type="term" value="C:endoplasmic reticulum membrane"/>
    <property type="evidence" value="ECO:0007669"/>
    <property type="project" value="UniProtKB-SubCell"/>
</dbReference>
<dbReference type="GO" id="GO:0005794">
    <property type="term" value="C:Golgi apparatus"/>
    <property type="evidence" value="ECO:0000318"/>
    <property type="project" value="GO_Central"/>
</dbReference>
<dbReference type="GO" id="GO:0042175">
    <property type="term" value="C:nuclear outer membrane-endoplasmic reticulum membrane network"/>
    <property type="evidence" value="ECO:0000314"/>
    <property type="project" value="SGD"/>
</dbReference>
<dbReference type="GO" id="GO:0016409">
    <property type="term" value="F:palmitoyltransferase activity"/>
    <property type="evidence" value="ECO:0000314"/>
    <property type="project" value="UniProtKB"/>
</dbReference>
<dbReference type="GO" id="GO:0019706">
    <property type="term" value="F:protein-cysteine S-palmitoyltransferase activity"/>
    <property type="evidence" value="ECO:0000318"/>
    <property type="project" value="GO_Central"/>
</dbReference>
<dbReference type="GO" id="GO:0030866">
    <property type="term" value="P:cortical actin cytoskeleton organization"/>
    <property type="evidence" value="ECO:0000315"/>
    <property type="project" value="SGD"/>
</dbReference>
<dbReference type="GO" id="GO:0030010">
    <property type="term" value="P:establishment of cell polarity"/>
    <property type="evidence" value="ECO:0000315"/>
    <property type="project" value="SGD"/>
</dbReference>
<dbReference type="GO" id="GO:0018345">
    <property type="term" value="P:protein palmitoylation"/>
    <property type="evidence" value="ECO:0000314"/>
    <property type="project" value="UniProtKB"/>
</dbReference>
<dbReference type="GO" id="GO:0006612">
    <property type="term" value="P:protein targeting to membrane"/>
    <property type="evidence" value="ECO:0000318"/>
    <property type="project" value="GO_Central"/>
</dbReference>
<dbReference type="GO" id="GO:0017157">
    <property type="term" value="P:regulation of exocytosis"/>
    <property type="evidence" value="ECO:0000315"/>
    <property type="project" value="SGD"/>
</dbReference>
<dbReference type="GO" id="GO:0042144">
    <property type="term" value="P:vacuole fusion, non-autophagic"/>
    <property type="evidence" value="ECO:0000316"/>
    <property type="project" value="SGD"/>
</dbReference>
<dbReference type="InterPro" id="IPR001594">
    <property type="entry name" value="Palmitoyltrfase_DHHC"/>
</dbReference>
<dbReference type="InterPro" id="IPR039859">
    <property type="entry name" value="PFA4/ZDH16/20/ERF2-like"/>
</dbReference>
<dbReference type="PANTHER" id="PTHR22883:SF489">
    <property type="entry name" value="PALMITOYLTRANSFERASE SWF1"/>
    <property type="match status" value="1"/>
</dbReference>
<dbReference type="PANTHER" id="PTHR22883">
    <property type="entry name" value="ZINC FINGER DHHC DOMAIN CONTAINING PROTEIN"/>
    <property type="match status" value="1"/>
</dbReference>
<dbReference type="Pfam" id="PF01529">
    <property type="entry name" value="DHHC"/>
    <property type="match status" value="1"/>
</dbReference>
<dbReference type="PROSITE" id="PS50216">
    <property type="entry name" value="DHHC"/>
    <property type="match status" value="1"/>
</dbReference>
<protein>
    <recommendedName>
        <fullName>Palmitoyltransferase SWF1</fullName>
        <ecNumber>2.3.1.225</ecNumber>
    </recommendedName>
    <alternativeName>
        <fullName>Spore wall formation protein 1</fullName>
    </alternativeName>
</protein>
<name>SWF1_YEAST</name>
<feature type="chain" id="PRO_0000212994" description="Palmitoyltransferase SWF1">
    <location>
        <begin position="1"/>
        <end position="336"/>
    </location>
</feature>
<feature type="topological domain" description="Lumenal" evidence="1">
    <location>
        <begin position="1"/>
        <end position="2"/>
    </location>
</feature>
<feature type="transmembrane region" description="Helical" evidence="1">
    <location>
        <begin position="3"/>
        <end position="23"/>
    </location>
</feature>
<feature type="topological domain" description="Cytoplasmic" evidence="1">
    <location>
        <begin position="24"/>
        <end position="50"/>
    </location>
</feature>
<feature type="transmembrane region" description="Helical" evidence="1">
    <location>
        <begin position="51"/>
        <end position="71"/>
    </location>
</feature>
<feature type="topological domain" description="Lumenal" evidence="1">
    <location>
        <begin position="72"/>
        <end position="86"/>
    </location>
</feature>
<feature type="transmembrane region" description="Helical" evidence="1">
    <location>
        <begin position="87"/>
        <end position="107"/>
    </location>
</feature>
<feature type="topological domain" description="Cytoplasmic" evidence="1">
    <location>
        <begin position="108"/>
        <end position="179"/>
    </location>
</feature>
<feature type="transmembrane region" description="Helical" evidence="1">
    <location>
        <begin position="180"/>
        <end position="200"/>
    </location>
</feature>
<feature type="topological domain" description="Lumenal" evidence="1">
    <location>
        <begin position="201"/>
        <end position="216"/>
    </location>
</feature>
<feature type="transmembrane region" description="Helical" evidence="1">
    <location>
        <begin position="217"/>
        <end position="237"/>
    </location>
</feature>
<feature type="topological domain" description="Cytoplasmic" evidence="1">
    <location>
        <begin position="238"/>
        <end position="336"/>
    </location>
</feature>
<feature type="domain" description="DHHC" evidence="2">
    <location>
        <begin position="134"/>
        <end position="184"/>
    </location>
</feature>
<feature type="mutagenesis site" description="Loss of function." evidence="3">
    <original>C</original>
    <variation>A</variation>
    <location>
        <position position="164"/>
    </location>
</feature>
<reference key="1">
    <citation type="journal article" date="1997" name="Nature">
        <title>The nucleotide sequence of Saccharomyces cerevisiae chromosome IV.</title>
        <authorList>
            <person name="Jacq C."/>
            <person name="Alt-Moerbe J."/>
            <person name="Andre B."/>
            <person name="Arnold W."/>
            <person name="Bahr A."/>
            <person name="Ballesta J.P.G."/>
            <person name="Bargues M."/>
            <person name="Baron L."/>
            <person name="Becker A."/>
            <person name="Biteau N."/>
            <person name="Bloecker H."/>
            <person name="Blugeon C."/>
            <person name="Boskovic J."/>
            <person name="Brandt P."/>
            <person name="Brueckner M."/>
            <person name="Buitrago M.J."/>
            <person name="Coster F."/>
            <person name="Delaveau T."/>
            <person name="del Rey F."/>
            <person name="Dujon B."/>
            <person name="Eide L.G."/>
            <person name="Garcia-Cantalejo J.M."/>
            <person name="Goffeau A."/>
            <person name="Gomez-Peris A."/>
            <person name="Granotier C."/>
            <person name="Hanemann V."/>
            <person name="Hankeln T."/>
            <person name="Hoheisel J.D."/>
            <person name="Jaeger W."/>
            <person name="Jimenez A."/>
            <person name="Jonniaux J.-L."/>
            <person name="Kraemer C."/>
            <person name="Kuester H."/>
            <person name="Laamanen P."/>
            <person name="Legros Y."/>
            <person name="Louis E.J."/>
            <person name="Moeller-Rieker S."/>
            <person name="Monnet A."/>
            <person name="Moro M."/>
            <person name="Mueller-Auer S."/>
            <person name="Nussbaumer B."/>
            <person name="Paricio N."/>
            <person name="Paulin L."/>
            <person name="Perea J."/>
            <person name="Perez-Alonso M."/>
            <person name="Perez-Ortin J.E."/>
            <person name="Pohl T.M."/>
            <person name="Prydz H."/>
            <person name="Purnelle B."/>
            <person name="Rasmussen S.W."/>
            <person name="Remacha M.A."/>
            <person name="Revuelta J.L."/>
            <person name="Rieger M."/>
            <person name="Salom D."/>
            <person name="Saluz H.P."/>
            <person name="Saiz J.E."/>
            <person name="Saren A.-M."/>
            <person name="Schaefer M."/>
            <person name="Scharfe M."/>
            <person name="Schmidt E.R."/>
            <person name="Schneider C."/>
            <person name="Scholler P."/>
            <person name="Schwarz S."/>
            <person name="Soler-Mira A."/>
            <person name="Urrestarazu L.A."/>
            <person name="Verhasselt P."/>
            <person name="Vissers S."/>
            <person name="Voet M."/>
            <person name="Volckaert G."/>
            <person name="Wagner G."/>
            <person name="Wambutt R."/>
            <person name="Wedler E."/>
            <person name="Wedler H."/>
            <person name="Woelfl S."/>
            <person name="Harris D.E."/>
            <person name="Bowman S."/>
            <person name="Brown D."/>
            <person name="Churcher C.M."/>
            <person name="Connor R."/>
            <person name="Dedman K."/>
            <person name="Gentles S."/>
            <person name="Hamlin N."/>
            <person name="Hunt S."/>
            <person name="Jones L."/>
            <person name="McDonald S."/>
            <person name="Murphy L.D."/>
            <person name="Niblett D."/>
            <person name="Odell C."/>
            <person name="Oliver K."/>
            <person name="Rajandream M.A."/>
            <person name="Richards C."/>
            <person name="Shore L."/>
            <person name="Walsh S.V."/>
            <person name="Barrell B.G."/>
            <person name="Dietrich F.S."/>
            <person name="Mulligan J.T."/>
            <person name="Allen E."/>
            <person name="Araujo R."/>
            <person name="Aviles E."/>
            <person name="Berno A."/>
            <person name="Carpenter J."/>
            <person name="Chen E."/>
            <person name="Cherry J.M."/>
            <person name="Chung E."/>
            <person name="Duncan M."/>
            <person name="Hunicke-Smith S."/>
            <person name="Hyman R.W."/>
            <person name="Komp C."/>
            <person name="Lashkari D."/>
            <person name="Lew H."/>
            <person name="Lin D."/>
            <person name="Mosedale D."/>
            <person name="Nakahara K."/>
            <person name="Namath A."/>
            <person name="Oefner P."/>
            <person name="Oh C."/>
            <person name="Petel F.X."/>
            <person name="Roberts D."/>
            <person name="Schramm S."/>
            <person name="Schroeder M."/>
            <person name="Shogren T."/>
            <person name="Shroff N."/>
            <person name="Winant A."/>
            <person name="Yelton M.A."/>
            <person name="Botstein D."/>
            <person name="Davis R.W."/>
            <person name="Johnston M."/>
            <person name="Andrews S."/>
            <person name="Brinkman R."/>
            <person name="Cooper J."/>
            <person name="Ding H."/>
            <person name="Du Z."/>
            <person name="Favello A."/>
            <person name="Fulton L."/>
            <person name="Gattung S."/>
            <person name="Greco T."/>
            <person name="Hallsworth K."/>
            <person name="Hawkins J."/>
            <person name="Hillier L.W."/>
            <person name="Jier M."/>
            <person name="Johnson D."/>
            <person name="Johnston L."/>
            <person name="Kirsten J."/>
            <person name="Kucaba T."/>
            <person name="Langston Y."/>
            <person name="Latreille P."/>
            <person name="Le T."/>
            <person name="Mardis E."/>
            <person name="Menezes S."/>
            <person name="Miller N."/>
            <person name="Nhan M."/>
            <person name="Pauley A."/>
            <person name="Peluso D."/>
            <person name="Rifkin L."/>
            <person name="Riles L."/>
            <person name="Taich A."/>
            <person name="Trevaskis E."/>
            <person name="Vignati D."/>
            <person name="Wilcox L."/>
            <person name="Wohldman P."/>
            <person name="Vaudin M."/>
            <person name="Wilson R."/>
            <person name="Waterston R."/>
            <person name="Albermann K."/>
            <person name="Hani J."/>
            <person name="Heumann K."/>
            <person name="Kleine K."/>
            <person name="Mewes H.-W."/>
            <person name="Zollner A."/>
            <person name="Zaccaria P."/>
        </authorList>
    </citation>
    <scope>NUCLEOTIDE SEQUENCE [LARGE SCALE GENOMIC DNA]</scope>
    <source>
        <strain>ATCC 204508 / S288c</strain>
    </source>
</reference>
<reference key="2">
    <citation type="journal article" date="2014" name="G3 (Bethesda)">
        <title>The reference genome sequence of Saccharomyces cerevisiae: Then and now.</title>
        <authorList>
            <person name="Engel S.R."/>
            <person name="Dietrich F.S."/>
            <person name="Fisk D.G."/>
            <person name="Binkley G."/>
            <person name="Balakrishnan R."/>
            <person name="Costanzo M.C."/>
            <person name="Dwight S.S."/>
            <person name="Hitz B.C."/>
            <person name="Karra K."/>
            <person name="Nash R.S."/>
            <person name="Weng S."/>
            <person name="Wong E.D."/>
            <person name="Lloyd P."/>
            <person name="Skrzypek M.S."/>
            <person name="Miyasato S.R."/>
            <person name="Simison M."/>
            <person name="Cherry J.M."/>
        </authorList>
    </citation>
    <scope>GENOME REANNOTATION</scope>
    <source>
        <strain>ATCC 204508 / S288c</strain>
    </source>
</reference>
<reference key="3">
    <citation type="journal article" date="2007" name="Genome Res.">
        <title>Approaching a complete repository of sequence-verified protein-encoding clones for Saccharomyces cerevisiae.</title>
        <authorList>
            <person name="Hu Y."/>
            <person name="Rolfs A."/>
            <person name="Bhullar B."/>
            <person name="Murthy T.V.S."/>
            <person name="Zhu C."/>
            <person name="Berger M.F."/>
            <person name="Camargo A.A."/>
            <person name="Kelley F."/>
            <person name="McCarron S."/>
            <person name="Jepson D."/>
            <person name="Richardson A."/>
            <person name="Raphael J."/>
            <person name="Moreira D."/>
            <person name="Taycher E."/>
            <person name="Zuo D."/>
            <person name="Mohr S."/>
            <person name="Kane M.F."/>
            <person name="Williamson J."/>
            <person name="Simpson A.J.G."/>
            <person name="Bulyk M.L."/>
            <person name="Harlow E."/>
            <person name="Marsischky G."/>
            <person name="Kolodner R.D."/>
            <person name="LaBaer J."/>
        </authorList>
    </citation>
    <scope>NUCLEOTIDE SEQUENCE [GENOMIC DNA]</scope>
    <source>
        <strain>ATCC 204508 / S288c</strain>
    </source>
</reference>
<reference key="4">
    <citation type="journal article" date="2005" name="EMBO J.">
        <title>Swf1-dependent palmitoylation of the SNARE Tlg1 prevents its ubiquitination and degradation.</title>
        <authorList>
            <person name="Valdez-Taubas J."/>
            <person name="Pelham H.R.B."/>
        </authorList>
    </citation>
    <scope>FUNCTION</scope>
    <scope>MUTAGENESIS OF CYS-164</scope>
    <scope>SUBCELLULAR LOCATION</scope>
</reference>
<reference key="5">
    <citation type="journal article" date="2006" name="Proc. Natl. Acad. Sci. U.S.A.">
        <title>A global topology map of the Saccharomyces cerevisiae membrane proteome.</title>
        <authorList>
            <person name="Kim H."/>
            <person name="Melen K."/>
            <person name="Oesterberg M."/>
            <person name="von Heijne G."/>
        </authorList>
    </citation>
    <scope>TOPOLOGY [LARGE SCALE ANALYSIS]</scope>
    <source>
        <strain>ATCC 208353 / W303-1A</strain>
    </source>
</reference>
<proteinExistence type="evidence at protein level"/>
<accession>Q04629</accession>
<accession>D6VSB2</accession>
<accession>Q03889</accession>
<organism>
    <name type="scientific">Saccharomyces cerevisiae (strain ATCC 204508 / S288c)</name>
    <name type="common">Baker's yeast</name>
    <dbReference type="NCBI Taxonomy" id="559292"/>
    <lineage>
        <taxon>Eukaryota</taxon>
        <taxon>Fungi</taxon>
        <taxon>Dikarya</taxon>
        <taxon>Ascomycota</taxon>
        <taxon>Saccharomycotina</taxon>
        <taxon>Saccharomycetes</taxon>
        <taxon>Saccharomycetales</taxon>
        <taxon>Saccharomycetaceae</taxon>
        <taxon>Saccharomyces</taxon>
    </lineage>
</organism>